<proteinExistence type="evidence at protein level"/>
<accession>Q910D6</accession>
<reference key="1">
    <citation type="journal article" date="2001" name="Proc. Natl. Acad. Sci. U.S.A.">
        <title>Pattern of mutation in the genome of influenza A virus on adaptation to increased virulence in the mouse lung: identification of functional themes.</title>
        <authorList>
            <person name="Brown E.G."/>
            <person name="Liu H."/>
            <person name="Kit L.C."/>
            <person name="Baird S."/>
            <person name="Nesrallah M."/>
        </authorList>
    </citation>
    <scope>NUCLEOTIDE SEQUENCE [GENOMIC RNA]</scope>
</reference>
<name>RDRP_I68A4</name>
<organism>
    <name type="scientific">Influenza A virus (strain A/Hong Kong/1/1968 H3N2)</name>
    <dbReference type="NCBI Taxonomy" id="506350"/>
    <lineage>
        <taxon>Viruses</taxon>
        <taxon>Riboviria</taxon>
        <taxon>Orthornavirae</taxon>
        <taxon>Negarnaviricota</taxon>
        <taxon>Polyploviricotina</taxon>
        <taxon>Insthoviricetes</taxon>
        <taxon>Articulavirales</taxon>
        <taxon>Orthomyxoviridae</taxon>
        <taxon>Alphainfluenzavirus</taxon>
        <taxon>Alphainfluenzavirus influenzae</taxon>
        <taxon>Influenza A virus</taxon>
    </lineage>
</organism>
<keyword id="KW-0002">3D-structure</keyword>
<keyword id="KW-1262">Eukaryotic host gene expression shutoff by virus</keyword>
<keyword id="KW-1191">Eukaryotic host transcription shutoff by virus</keyword>
<keyword id="KW-1035">Host cytoplasm</keyword>
<keyword id="KW-1190">Host gene expression shutoff by virus</keyword>
<keyword id="KW-1048">Host nucleus</keyword>
<keyword id="KW-0945">Host-virus interaction</keyword>
<keyword id="KW-1104">Inhibition of host RNA polymerase II by virus</keyword>
<keyword id="KW-0547">Nucleotide-binding</keyword>
<keyword id="KW-0548">Nucleotidyltransferase</keyword>
<keyword id="KW-0597">Phosphoprotein</keyword>
<keyword id="KW-0696">RNA-directed RNA polymerase</keyword>
<keyword id="KW-0808">Transferase</keyword>
<keyword id="KW-0693">Viral RNA replication</keyword>
<keyword id="KW-1195">Viral transcription</keyword>
<organismHost>
    <name type="scientific">Aves</name>
    <dbReference type="NCBI Taxonomy" id="8782"/>
</organismHost>
<organismHost>
    <name type="scientific">Cetacea</name>
    <name type="common">whales</name>
    <dbReference type="NCBI Taxonomy" id="9721"/>
</organismHost>
<organismHost>
    <name type="scientific">Homo sapiens</name>
    <name type="common">Human</name>
    <dbReference type="NCBI Taxonomy" id="9606"/>
</organismHost>
<organismHost>
    <name type="scientific">Phocidae</name>
    <name type="common">true seals</name>
    <dbReference type="NCBI Taxonomy" id="9709"/>
</organismHost>
<organismHost>
    <name type="scientific">Sus scrofa</name>
    <name type="common">Pig</name>
    <dbReference type="NCBI Taxonomy" id="9823"/>
</organismHost>
<gene>
    <name evidence="1" type="primary">PB1</name>
</gene>
<evidence type="ECO:0000255" key="1">
    <source>
        <dbReference type="HAMAP-Rule" id="MF_04065"/>
    </source>
</evidence>
<evidence type="ECO:0000256" key="2">
    <source>
        <dbReference type="SAM" id="MobiDB-lite"/>
    </source>
</evidence>
<evidence type="ECO:0007829" key="3">
    <source>
        <dbReference type="PDB" id="8Y7M"/>
    </source>
</evidence>
<evidence type="ECO:0007829" key="4">
    <source>
        <dbReference type="PDB" id="8Y7O"/>
    </source>
</evidence>
<feature type="chain" id="PRO_0000279599" description="RNA-directed RNA polymerase catalytic subunit">
    <location>
        <begin position="1"/>
        <end position="757"/>
    </location>
</feature>
<feature type="domain" description="RdRp catalytic" evidence="1">
    <location>
        <begin position="286"/>
        <end position="483"/>
    </location>
</feature>
<feature type="region of interest" description="Disordered" evidence="2">
    <location>
        <begin position="50"/>
        <end position="82"/>
    </location>
</feature>
<feature type="region of interest" description="Promoter-binding site" evidence="1">
    <location>
        <begin position="249"/>
        <end position="256"/>
    </location>
</feature>
<feature type="short sequence motif" description="Nuclear localization signal" evidence="1">
    <location>
        <begin position="187"/>
        <end position="195"/>
    </location>
</feature>
<feature type="short sequence motif" description="Nuclear localization signal" evidence="1">
    <location>
        <begin position="203"/>
        <end position="216"/>
    </location>
</feature>
<feature type="compositionally biased region" description="Polar residues" evidence="2">
    <location>
        <begin position="55"/>
        <end position="64"/>
    </location>
</feature>
<feature type="helix" evidence="3">
    <location>
        <begin position="7"/>
        <end position="11"/>
    </location>
</feature>
<feature type="turn" evidence="3">
    <location>
        <begin position="14"/>
        <end position="16"/>
    </location>
</feature>
<feature type="helix" evidence="3">
    <location>
        <begin position="18"/>
        <end position="21"/>
    </location>
</feature>
<feature type="helix" evidence="3">
    <location>
        <begin position="36"/>
        <end position="48"/>
    </location>
</feature>
<feature type="turn" evidence="3">
    <location>
        <begin position="49"/>
        <end position="52"/>
    </location>
</feature>
<feature type="strand" evidence="3">
    <location>
        <begin position="55"/>
        <end position="57"/>
    </location>
</feature>
<feature type="turn" evidence="3">
    <location>
        <begin position="59"/>
        <end position="61"/>
    </location>
</feature>
<feature type="strand" evidence="3">
    <location>
        <begin position="64"/>
        <end position="66"/>
    </location>
</feature>
<feature type="strand" evidence="3">
    <location>
        <begin position="75"/>
        <end position="78"/>
    </location>
</feature>
<feature type="helix" evidence="3">
    <location>
        <begin position="85"/>
        <end position="98"/>
    </location>
</feature>
<feature type="helix" evidence="3">
    <location>
        <begin position="102"/>
        <end position="115"/>
    </location>
</feature>
<feature type="helix" evidence="3">
    <location>
        <begin position="119"/>
        <end position="123"/>
    </location>
</feature>
<feature type="turn" evidence="3">
    <location>
        <begin position="131"/>
        <end position="134"/>
    </location>
</feature>
<feature type="helix" evidence="3">
    <location>
        <begin position="139"/>
        <end position="151"/>
    </location>
</feature>
<feature type="turn" evidence="3">
    <location>
        <begin position="152"/>
        <end position="154"/>
    </location>
</feature>
<feature type="helix" evidence="3">
    <location>
        <begin position="158"/>
        <end position="160"/>
    </location>
</feature>
<feature type="strand" evidence="4">
    <location>
        <begin position="161"/>
        <end position="163"/>
    </location>
</feature>
<feature type="helix" evidence="3">
    <location>
        <begin position="164"/>
        <end position="175"/>
    </location>
</feature>
<feature type="strand" evidence="3">
    <location>
        <begin position="180"/>
        <end position="183"/>
    </location>
</feature>
<feature type="strand" evidence="3">
    <location>
        <begin position="208"/>
        <end position="210"/>
    </location>
</feature>
<feature type="helix" evidence="3">
    <location>
        <begin position="214"/>
        <end position="220"/>
    </location>
</feature>
<feature type="strand" evidence="3">
    <location>
        <begin position="222"/>
        <end position="224"/>
    </location>
</feature>
<feature type="strand" evidence="3">
    <location>
        <begin position="246"/>
        <end position="248"/>
    </location>
</feature>
<feature type="helix" evidence="3">
    <location>
        <begin position="249"/>
        <end position="263"/>
    </location>
</feature>
<feature type="strand" evidence="3">
    <location>
        <begin position="267"/>
        <end position="269"/>
    </location>
</feature>
<feature type="helix" evidence="3">
    <location>
        <begin position="276"/>
        <end position="289"/>
    </location>
</feature>
<feature type="strand" evidence="3">
    <location>
        <begin position="297"/>
        <end position="307"/>
    </location>
</feature>
<feature type="helix" evidence="3">
    <location>
        <begin position="310"/>
        <end position="312"/>
    </location>
</feature>
<feature type="helix" evidence="3">
    <location>
        <begin position="315"/>
        <end position="325"/>
    </location>
</feature>
<feature type="turn" evidence="3">
    <location>
        <begin position="326"/>
        <end position="328"/>
    </location>
</feature>
<feature type="helix" evidence="3">
    <location>
        <begin position="331"/>
        <end position="344"/>
    </location>
</feature>
<feature type="strand" evidence="3">
    <location>
        <begin position="353"/>
        <end position="362"/>
    </location>
</feature>
<feature type="strand" evidence="3">
    <location>
        <begin position="365"/>
        <end position="370"/>
    </location>
</feature>
<feature type="helix" evidence="3">
    <location>
        <begin position="373"/>
        <end position="375"/>
    </location>
</feature>
<feature type="strand" evidence="3">
    <location>
        <begin position="378"/>
        <end position="381"/>
    </location>
</feature>
<feature type="helix" evidence="3">
    <location>
        <begin position="383"/>
        <end position="392"/>
    </location>
</feature>
<feature type="helix" evidence="3">
    <location>
        <begin position="416"/>
        <end position="425"/>
    </location>
</feature>
<feature type="helix" evidence="3">
    <location>
        <begin position="429"/>
        <end position="432"/>
    </location>
</feature>
<feature type="strand" evidence="3">
    <location>
        <begin position="437"/>
        <end position="442"/>
    </location>
</feature>
<feature type="strand" evidence="3">
    <location>
        <begin position="444"/>
        <end position="455"/>
    </location>
</feature>
<feature type="helix" evidence="3">
    <location>
        <begin position="456"/>
        <end position="473"/>
    </location>
</feature>
<feature type="strand" evidence="3">
    <location>
        <begin position="477"/>
        <end position="486"/>
    </location>
</feature>
<feature type="strand" evidence="3">
    <location>
        <begin position="490"/>
        <end position="492"/>
    </location>
</feature>
<feature type="strand" evidence="3">
    <location>
        <begin position="495"/>
        <end position="497"/>
    </location>
</feature>
<feature type="helix" evidence="3">
    <location>
        <begin position="521"/>
        <end position="536"/>
    </location>
</feature>
<feature type="helix" evidence="3">
    <location>
        <begin position="541"/>
        <end position="559"/>
    </location>
</feature>
<feature type="helix" evidence="3">
    <location>
        <begin position="573"/>
        <end position="582"/>
    </location>
</feature>
<feature type="helix" evidence="3">
    <location>
        <begin position="586"/>
        <end position="588"/>
    </location>
</feature>
<feature type="helix" evidence="3">
    <location>
        <begin position="591"/>
        <end position="593"/>
    </location>
</feature>
<feature type="helix" evidence="3">
    <location>
        <begin position="601"/>
        <end position="603"/>
    </location>
</feature>
<feature type="helix" evidence="3">
    <location>
        <begin position="608"/>
        <end position="612"/>
    </location>
</feature>
<feature type="helix" evidence="3">
    <location>
        <begin position="613"/>
        <end position="615"/>
    </location>
</feature>
<feature type="helix" evidence="3">
    <location>
        <begin position="618"/>
        <end position="624"/>
    </location>
</feature>
<feature type="helix" evidence="3">
    <location>
        <begin position="688"/>
        <end position="697"/>
    </location>
</feature>
<feature type="helix" evidence="3">
    <location>
        <begin position="701"/>
        <end position="704"/>
    </location>
</feature>
<feature type="strand" evidence="3">
    <location>
        <begin position="711"/>
        <end position="713"/>
    </location>
</feature>
<feature type="helix" evidence="3">
    <location>
        <begin position="714"/>
        <end position="731"/>
    </location>
</feature>
<feature type="helix" evidence="3">
    <location>
        <begin position="738"/>
        <end position="754"/>
    </location>
</feature>
<comment type="function">
    <text evidence="1">RNA-dependent RNA polymerase which is responsible for replication and transcription of virus RNA segments. The transcription of viral mRNAs occurs by a unique mechanism called cap-snatching. 5' methylated caps of cellular mRNAs are cleaved after 10-13 nucleotides by PA. In turn, these short capped RNAs are used as primers by PB1 for transcription of viral mRNAs. During virus replication, PB1 initiates RNA synthesis and copy vRNA into complementary RNA (cRNA) which in turn serves as a template for the production of more vRNAs.</text>
</comment>
<comment type="catalytic activity">
    <reaction evidence="1">
        <text>RNA(n) + a ribonucleoside 5'-triphosphate = RNA(n+1) + diphosphate</text>
        <dbReference type="Rhea" id="RHEA:21248"/>
        <dbReference type="Rhea" id="RHEA-COMP:14527"/>
        <dbReference type="Rhea" id="RHEA-COMP:17342"/>
        <dbReference type="ChEBI" id="CHEBI:33019"/>
        <dbReference type="ChEBI" id="CHEBI:61557"/>
        <dbReference type="ChEBI" id="CHEBI:140395"/>
        <dbReference type="EC" id="2.7.7.48"/>
    </reaction>
</comment>
<comment type="subunit">
    <text evidence="1">Influenza RNA polymerase is composed of three subunits: PB1, PB2 and PA. Interacts (via N-terminus) with PA (via C-terminus). Interacts (via C-terminus) with PB2 (via N-terminus); this interaction is essential for transcription initiation.</text>
</comment>
<comment type="subcellular location">
    <subcellularLocation>
        <location evidence="1">Host nucleus</location>
    </subcellularLocation>
    <subcellularLocation>
        <location evidence="1">Host cytoplasm</location>
    </subcellularLocation>
</comment>
<comment type="PTM">
    <text evidence="1">Phosphorylated by host PRKCA.</text>
</comment>
<comment type="similarity">
    <text evidence="1">Belongs to the influenza viruses polymerase PB1 family.</text>
</comment>
<sequence>MDVNPTLLFLKVPAQNAISTTFPYTGDPPYSHGTGTGYTMDTVNRTHQYSEKGKWTTNTETGAPQLNPIDGPLPEDNEPSGYAQTDCVLEAMAFLEESHPGIFENSCLETMEVVQQTRVDRLTQGRQTYDWTLNRNQPAATALANTIEVFRSNGLTANESGRLIDFLKDVMESMDKEEMEITTHFQRKRRVRDNMTKKMVTQRTIGKKKQRVNKRSYLIRALTLNTMTKDAERGKLKRRAIATPGMQIRGFVYFVETLARSICEKLEQSGLPVGGNEKKAKLANVVRKMMTNSQDTELSFTITGDNTKWNENQNPRMFLAMITYITKNQPEWFRNVLSIAPIMFSNKMARLGKGYMFESKSMKLRTQIPAEMLASIDLKYFNESTRKKIEKIRPLLIDGTASLSPGMMMGMFNMLSTVLGVSILNLGQKRYTKTTYWWDGLQSSDDFALIVNAPNHEGIQAGVDRFYRTCKLVGINMSKKKSYINRTGTFEFTSFFYRYGFVANFSMELPSFGVSGINESADMSIGVTVIKNNMINNDLGPATAQMALQLFIKDYRYTYRCHRGDTQIQTRRSFELKKLWEQTRSKAGLLVSDGGPNLYNIRNLHIPEVCLKWELMDEDYQGRLCNPLNPFVSHKEIESVNNAVVMPAHGPAKSMEYDAVATTHSWIPKRNRSILNTSQRGILEDEQMYQKCCNLFEKFFPSSSYRRPVGISSMVEAMVSRARIDARIDFESGRIKKEEFAEIMKICSTIEELRRQK</sequence>
<dbReference type="EC" id="2.7.7.48" evidence="1"/>
<dbReference type="EMBL" id="AF348173">
    <property type="protein sequence ID" value="AAK51715.1"/>
    <property type="molecule type" value="Genomic_RNA"/>
</dbReference>
<dbReference type="EMBL" id="AF348172">
    <property type="protein sequence ID" value="AAK51714.1"/>
    <property type="molecule type" value="Genomic_RNA"/>
</dbReference>
<dbReference type="PDB" id="6QX3">
    <property type="method" value="EM"/>
    <property type="resolution" value="3.79 A"/>
    <property type="chains" value="B=1-757"/>
</dbReference>
<dbReference type="PDB" id="8Y7M">
    <property type="method" value="EM"/>
    <property type="resolution" value="3.00 A"/>
    <property type="chains" value="B/F=1-757"/>
</dbReference>
<dbReference type="PDB" id="8Y7O">
    <property type="method" value="EM"/>
    <property type="resolution" value="3.00 A"/>
    <property type="chains" value="B/F/H/J/N/R=1-757"/>
</dbReference>
<dbReference type="PDBsum" id="6QX3"/>
<dbReference type="PDBsum" id="8Y7M"/>
<dbReference type="PDBsum" id="8Y7O"/>
<dbReference type="EMDB" id="EMD-39020"/>
<dbReference type="EMDB" id="EMD-39022"/>
<dbReference type="EMDB" id="EMD-4661"/>
<dbReference type="SMR" id="Q910D6"/>
<dbReference type="IntAct" id="Q910D6">
    <property type="interactions" value="1"/>
</dbReference>
<dbReference type="ABCD" id="Q910D6">
    <property type="antibodies" value="1 sequenced antibody"/>
</dbReference>
<dbReference type="Proteomes" id="UP000142359">
    <property type="component" value="Genome"/>
</dbReference>
<dbReference type="GO" id="GO:0030430">
    <property type="term" value="C:host cell cytoplasm"/>
    <property type="evidence" value="ECO:0007669"/>
    <property type="project" value="UniProtKB-SubCell"/>
</dbReference>
<dbReference type="GO" id="GO:0042025">
    <property type="term" value="C:host cell nucleus"/>
    <property type="evidence" value="ECO:0007669"/>
    <property type="project" value="UniProtKB-SubCell"/>
</dbReference>
<dbReference type="GO" id="GO:0000166">
    <property type="term" value="F:nucleotide binding"/>
    <property type="evidence" value="ECO:0007669"/>
    <property type="project" value="UniProtKB-UniRule"/>
</dbReference>
<dbReference type="GO" id="GO:0003723">
    <property type="term" value="F:RNA binding"/>
    <property type="evidence" value="ECO:0007669"/>
    <property type="project" value="InterPro"/>
</dbReference>
<dbReference type="GO" id="GO:0003968">
    <property type="term" value="F:RNA-directed RNA polymerase activity"/>
    <property type="evidence" value="ECO:0007669"/>
    <property type="project" value="UniProtKB-UniRule"/>
</dbReference>
<dbReference type="GO" id="GO:0006351">
    <property type="term" value="P:DNA-templated transcription"/>
    <property type="evidence" value="ECO:0007669"/>
    <property type="project" value="UniProtKB-UniRule"/>
</dbReference>
<dbReference type="GO" id="GO:0039657">
    <property type="term" value="P:symbiont-mediated suppression of host gene expression"/>
    <property type="evidence" value="ECO:0007669"/>
    <property type="project" value="UniProtKB-KW"/>
</dbReference>
<dbReference type="GO" id="GO:0039523">
    <property type="term" value="P:symbiont-mediated suppression of host mRNA transcription via inhibition of RNA polymerase II activity"/>
    <property type="evidence" value="ECO:0007669"/>
    <property type="project" value="UniProtKB-UniRule"/>
</dbReference>
<dbReference type="GO" id="GO:0039694">
    <property type="term" value="P:viral RNA genome replication"/>
    <property type="evidence" value="ECO:0007669"/>
    <property type="project" value="UniProtKB-UniRule"/>
</dbReference>
<dbReference type="GO" id="GO:0019083">
    <property type="term" value="P:viral transcription"/>
    <property type="evidence" value="ECO:0007669"/>
    <property type="project" value="UniProtKB-KW"/>
</dbReference>
<dbReference type="Gene3D" id="6.10.140.720">
    <property type="match status" value="1"/>
</dbReference>
<dbReference type="HAMAP" id="MF_04065">
    <property type="entry name" value="INFV_RDRP"/>
    <property type="match status" value="1"/>
</dbReference>
<dbReference type="InterPro" id="IPR007099">
    <property type="entry name" value="RNA-dir_pol_NSvirus"/>
</dbReference>
<dbReference type="InterPro" id="IPR001407">
    <property type="entry name" value="RNA_pol_PB1_influenza"/>
</dbReference>
<dbReference type="Pfam" id="PF00602">
    <property type="entry name" value="Flu_PB1"/>
    <property type="match status" value="1"/>
</dbReference>
<dbReference type="PIRSF" id="PIRSF000827">
    <property type="entry name" value="RdRPol_OMV"/>
    <property type="match status" value="1"/>
</dbReference>
<dbReference type="PROSITE" id="PS50525">
    <property type="entry name" value="RDRP_SSRNA_NEG_SEG"/>
    <property type="match status" value="1"/>
</dbReference>
<protein>
    <recommendedName>
        <fullName evidence="1">RNA-directed RNA polymerase catalytic subunit</fullName>
        <ecNumber evidence="1">2.7.7.48</ecNumber>
    </recommendedName>
    <alternativeName>
        <fullName evidence="1">Polymerase basic protein 1</fullName>
        <shortName evidence="1">PB1</shortName>
    </alternativeName>
    <alternativeName>
        <fullName evidence="1">RNA-directed RNA polymerase subunit P1</fullName>
    </alternativeName>
</protein>